<proteinExistence type="evidence at transcript level"/>
<feature type="signal peptide" evidence="4">
    <location>
        <begin position="1"/>
        <end position="19"/>
    </location>
</feature>
<feature type="propeptide" id="PRO_0000358874" evidence="1">
    <location>
        <begin position="20"/>
        <end position="105"/>
    </location>
</feature>
<feature type="chain" id="PRO_0000358875" description="Phospholipase A2 large subunit">
    <location>
        <begin position="107"/>
        <end position="210"/>
    </location>
</feature>
<feature type="propeptide" id="PRO_0000358876" evidence="1">
    <location>
        <begin position="211"/>
        <end position="213"/>
    </location>
</feature>
<feature type="chain" id="PRO_0000358877" description="Phospholipase A2 small subunit">
    <location>
        <begin position="214"/>
        <end position="239"/>
    </location>
</feature>
<feature type="active site" evidence="5">
    <location>
        <position position="139"/>
    </location>
</feature>
<feature type="binding site" evidence="2">
    <location>
        <position position="113"/>
    </location>
    <ligand>
        <name>Ca(2+)</name>
        <dbReference type="ChEBI" id="CHEBI:29108"/>
    </ligand>
</feature>
<feature type="binding site" evidence="2">
    <location>
        <position position="115"/>
    </location>
    <ligand>
        <name>Ca(2+)</name>
        <dbReference type="ChEBI" id="CHEBI:29108"/>
    </ligand>
</feature>
<feature type="binding site" evidence="2">
    <location>
        <position position="117"/>
    </location>
    <ligand>
        <name>Ca(2+)</name>
        <dbReference type="ChEBI" id="CHEBI:29108"/>
    </ligand>
</feature>
<feature type="binding site" evidence="2">
    <location>
        <position position="140"/>
    </location>
    <ligand>
        <name>Ca(2+)</name>
        <dbReference type="ChEBI" id="CHEBI:29108"/>
    </ligand>
</feature>
<feature type="disulfide bond" evidence="3">
    <location>
        <begin position="114"/>
        <end position="136"/>
    </location>
</feature>
<feature type="disulfide bond" evidence="3">
    <location>
        <begin position="135"/>
        <end position="174"/>
    </location>
</feature>
<feature type="disulfide bond" evidence="3">
    <location>
        <begin position="142"/>
        <end position="167"/>
    </location>
</feature>
<feature type="disulfide bond" evidence="3">
    <location>
        <begin position="165"/>
        <end position="202"/>
    </location>
</feature>
<feature type="disulfide bond" description="Interchain (between large and small chains)" evidence="3">
    <location>
        <begin position="207"/>
        <end position="217"/>
    </location>
</feature>
<accession>P0C8L9</accession>
<evidence type="ECO:0000250" key="1"/>
<evidence type="ECO:0000250" key="2">
    <source>
        <dbReference type="UniProtKB" id="P00630"/>
    </source>
</evidence>
<evidence type="ECO:0000250" key="3">
    <source>
        <dbReference type="UniProtKB" id="Q6T178"/>
    </source>
</evidence>
<evidence type="ECO:0000255" key="4"/>
<evidence type="ECO:0000255" key="5">
    <source>
        <dbReference type="PROSITE-ProRule" id="PRU10035"/>
    </source>
</evidence>
<evidence type="ECO:0000305" key="6"/>
<protein>
    <recommendedName>
        <fullName>Phospholipase A2</fullName>
        <shortName>HgPLA2</shortName>
        <ecNumber>3.1.1.4</ecNumber>
    </recommendedName>
    <alternativeName>
        <fullName>Group III heterodimeric phospholipase A2</fullName>
    </alternativeName>
    <alternativeName>
        <fullName>Phosphatidylcholine 2-acylhydrolase</fullName>
    </alternativeName>
    <component>
        <recommendedName>
            <fullName>Phospholipase A2 large subunit</fullName>
        </recommendedName>
    </component>
    <component>
        <recommendedName>
            <fullName>Phospholipase A2 small subunit</fullName>
        </recommendedName>
    </component>
</protein>
<organism>
    <name type="scientific">Hoffmannihadrurus gertschi</name>
    <name type="common">Scorpion</name>
    <name type="synonym">Hadrurus gertschi</name>
    <dbReference type="NCBI Taxonomy" id="380989"/>
    <lineage>
        <taxon>Eukaryota</taxon>
        <taxon>Metazoa</taxon>
        <taxon>Ecdysozoa</taxon>
        <taxon>Arthropoda</taxon>
        <taxon>Chelicerata</taxon>
        <taxon>Arachnida</taxon>
        <taxon>Scorpiones</taxon>
        <taxon>Iurida</taxon>
        <taxon>Iuroidea</taxon>
        <taxon>Hadrurus</taxon>
    </lineage>
</organism>
<comment type="function">
    <text evidence="1">Toxic phospholipase A2, which may catalyze the calcium-dependent hydrolysis of the 2-acyl groups in 3-sn-phosphoglycerides. Inhibits both skeletal (RYR1) and cardiac (RYR2) ryanodine receptors (calcium release channels). Probably blocks ryanodine receptors by generating a lipid product (By similarity).</text>
</comment>
<comment type="catalytic activity">
    <reaction evidence="5">
        <text>a 1,2-diacyl-sn-glycero-3-phosphocholine + H2O = a 1-acyl-sn-glycero-3-phosphocholine + a fatty acid + H(+)</text>
        <dbReference type="Rhea" id="RHEA:15801"/>
        <dbReference type="ChEBI" id="CHEBI:15377"/>
        <dbReference type="ChEBI" id="CHEBI:15378"/>
        <dbReference type="ChEBI" id="CHEBI:28868"/>
        <dbReference type="ChEBI" id="CHEBI:57643"/>
        <dbReference type="ChEBI" id="CHEBI:58168"/>
        <dbReference type="EC" id="3.1.1.4"/>
    </reaction>
</comment>
<comment type="cofactor">
    <cofactor evidence="1">
        <name>Ca(2+)</name>
        <dbReference type="ChEBI" id="CHEBI:29108"/>
    </cofactor>
    <text evidence="1">Binds 1 Ca(2+) ion.</text>
</comment>
<comment type="subunit">
    <text evidence="1">Heterodimer composed of a small subunit and a large subunit; disulfid-linked.</text>
</comment>
<comment type="subcellular location">
    <subcellularLocation>
        <location evidence="1">Secreted</location>
    </subcellularLocation>
</comment>
<comment type="tissue specificity">
    <text>Expressed by the venom gland.</text>
</comment>
<comment type="similarity">
    <text evidence="6">Belongs to the phospholipase A2 family. Group III subfamily.</text>
</comment>
<reference key="1">
    <citation type="journal article" date="2007" name="BMC Genomics">
        <title>Transcriptome analysis of the venom gland of the Mexican scorpion Hadrurus gertschi (Arachnida: Scorpiones).</title>
        <authorList>
            <person name="Schwartz E.F."/>
            <person name="Diego-Garcia E."/>
            <person name="Rodriguez de la Vega R.C."/>
            <person name="Possani L.D."/>
        </authorList>
    </citation>
    <scope>NUCLEOTIDE SEQUENCE [LARGE SCALE MRNA]</scope>
    <source>
        <tissue>Venom gland</tissue>
    </source>
</reference>
<dbReference type="EC" id="3.1.1.4"/>
<dbReference type="EMBL" id="EL698905">
    <property type="status" value="NOT_ANNOTATED_CDS"/>
    <property type="molecule type" value="mRNA"/>
</dbReference>
<dbReference type="SMR" id="P0C8L9"/>
<dbReference type="GO" id="GO:0005576">
    <property type="term" value="C:extracellular region"/>
    <property type="evidence" value="ECO:0007669"/>
    <property type="project" value="UniProtKB-SubCell"/>
</dbReference>
<dbReference type="GO" id="GO:0005246">
    <property type="term" value="F:calcium channel regulator activity"/>
    <property type="evidence" value="ECO:0007669"/>
    <property type="project" value="UniProtKB-KW"/>
</dbReference>
<dbReference type="GO" id="GO:0046872">
    <property type="term" value="F:metal ion binding"/>
    <property type="evidence" value="ECO:0007669"/>
    <property type="project" value="UniProtKB-KW"/>
</dbReference>
<dbReference type="GO" id="GO:0004623">
    <property type="term" value="F:phospholipase A2 activity"/>
    <property type="evidence" value="ECO:0007669"/>
    <property type="project" value="UniProtKB-EC"/>
</dbReference>
<dbReference type="GO" id="GO:0090729">
    <property type="term" value="F:toxin activity"/>
    <property type="evidence" value="ECO:0007669"/>
    <property type="project" value="UniProtKB-KW"/>
</dbReference>
<dbReference type="GO" id="GO:0050482">
    <property type="term" value="P:arachidonate secretion"/>
    <property type="evidence" value="ECO:0007669"/>
    <property type="project" value="InterPro"/>
</dbReference>
<dbReference type="GO" id="GO:0016042">
    <property type="term" value="P:lipid catabolic process"/>
    <property type="evidence" value="ECO:0007669"/>
    <property type="project" value="UniProtKB-KW"/>
</dbReference>
<dbReference type="GO" id="GO:0006644">
    <property type="term" value="P:phospholipid metabolic process"/>
    <property type="evidence" value="ECO:0007669"/>
    <property type="project" value="InterPro"/>
</dbReference>
<dbReference type="Gene3D" id="1.20.90.10">
    <property type="entry name" value="Phospholipase A2 domain"/>
    <property type="match status" value="1"/>
</dbReference>
<dbReference type="InterPro" id="IPR016090">
    <property type="entry name" value="PLipase_A2_dom"/>
</dbReference>
<dbReference type="InterPro" id="IPR036444">
    <property type="entry name" value="PLipase_A2_dom_sf"/>
</dbReference>
<dbReference type="InterPro" id="IPR033113">
    <property type="entry name" value="PLipase_A2_His_AS"/>
</dbReference>
<dbReference type="PANTHER" id="PTHR12253">
    <property type="entry name" value="RH14732P"/>
    <property type="match status" value="1"/>
</dbReference>
<dbReference type="Pfam" id="PF05826">
    <property type="entry name" value="Phospholip_A2_2"/>
    <property type="match status" value="1"/>
</dbReference>
<dbReference type="SUPFAM" id="SSF48619">
    <property type="entry name" value="Phospholipase A2, PLA2"/>
    <property type="match status" value="1"/>
</dbReference>
<dbReference type="PROSITE" id="PS00118">
    <property type="entry name" value="PA2_HIS"/>
    <property type="match status" value="1"/>
</dbReference>
<name>PA2_HOFGE</name>
<sequence>MSLIIVLVISVLSADAVLSMDNELYLNLEPSQRSSWPVARAVRMQFSKRSEGGRESRKMQGCQILESLNDIAREALRTPRHTTKRISKDEMEFFEGRCLSVGESERTVLGTKWCGAGNEAANYSDLGYFNNVDRCCREHDHCDNIPAGETKYGLKNEGTYTMMNCKCEKAFDKCLSDISGYFTRKAVSAVKFTYFTLYGNGCYNVKCENGRSPSNECPNGVAEYTGETGLGAKVINFGK</sequence>
<keyword id="KW-0106">Calcium</keyword>
<keyword id="KW-0108">Calcium channel impairing toxin</keyword>
<keyword id="KW-1015">Disulfide bond</keyword>
<keyword id="KW-0378">Hydrolase</keyword>
<keyword id="KW-0872">Ion channel impairing toxin</keyword>
<keyword id="KW-0442">Lipid degradation</keyword>
<keyword id="KW-0443">Lipid metabolism</keyword>
<keyword id="KW-0479">Metal-binding</keyword>
<keyword id="KW-0528">Neurotoxin</keyword>
<keyword id="KW-1219">Ryanodine-sensitive calcium-release channel impairing toxin</keyword>
<keyword id="KW-0964">Secreted</keyword>
<keyword id="KW-0732">Signal</keyword>
<keyword id="KW-0800">Toxin</keyword>
<keyword id="KW-0865">Zymogen</keyword>